<organism>
    <name type="scientific">Xanthobacter autotrophicus (strain ATCC BAA-1158 / Py2)</name>
    <dbReference type="NCBI Taxonomy" id="78245"/>
    <lineage>
        <taxon>Bacteria</taxon>
        <taxon>Pseudomonadati</taxon>
        <taxon>Pseudomonadota</taxon>
        <taxon>Alphaproteobacteria</taxon>
        <taxon>Hyphomicrobiales</taxon>
        <taxon>Xanthobacteraceae</taxon>
        <taxon>Xanthobacter</taxon>
    </lineage>
</organism>
<accession>A7INR6</accession>
<protein>
    <recommendedName>
        <fullName evidence="1">Small ribosomal subunit protein uS2</fullName>
    </recommendedName>
    <alternativeName>
        <fullName evidence="2">30S ribosomal protein S2</fullName>
    </alternativeName>
</protein>
<proteinExistence type="inferred from homology"/>
<feature type="chain" id="PRO_1000115076" description="Small ribosomal subunit protein uS2">
    <location>
        <begin position="1"/>
        <end position="334"/>
    </location>
</feature>
<keyword id="KW-1185">Reference proteome</keyword>
<keyword id="KW-0687">Ribonucleoprotein</keyword>
<keyword id="KW-0689">Ribosomal protein</keyword>
<comment type="similarity">
    <text evidence="1">Belongs to the universal ribosomal protein uS2 family.</text>
</comment>
<dbReference type="EMBL" id="CP000781">
    <property type="protein sequence ID" value="ABS69660.1"/>
    <property type="molecule type" value="Genomic_DNA"/>
</dbReference>
<dbReference type="SMR" id="A7INR6"/>
<dbReference type="STRING" id="78245.Xaut_4439"/>
<dbReference type="KEGG" id="xau:Xaut_4439"/>
<dbReference type="eggNOG" id="COG0052">
    <property type="taxonomic scope" value="Bacteria"/>
</dbReference>
<dbReference type="HOGENOM" id="CLU_040318_2_1_5"/>
<dbReference type="OrthoDB" id="9808036at2"/>
<dbReference type="PhylomeDB" id="A7INR6"/>
<dbReference type="Proteomes" id="UP000002417">
    <property type="component" value="Chromosome"/>
</dbReference>
<dbReference type="GO" id="GO:0022627">
    <property type="term" value="C:cytosolic small ribosomal subunit"/>
    <property type="evidence" value="ECO:0007669"/>
    <property type="project" value="TreeGrafter"/>
</dbReference>
<dbReference type="GO" id="GO:0003735">
    <property type="term" value="F:structural constituent of ribosome"/>
    <property type="evidence" value="ECO:0007669"/>
    <property type="project" value="InterPro"/>
</dbReference>
<dbReference type="GO" id="GO:0006412">
    <property type="term" value="P:translation"/>
    <property type="evidence" value="ECO:0007669"/>
    <property type="project" value="UniProtKB-UniRule"/>
</dbReference>
<dbReference type="CDD" id="cd01425">
    <property type="entry name" value="RPS2"/>
    <property type="match status" value="1"/>
</dbReference>
<dbReference type="FunFam" id="1.10.287.610:FF:000001">
    <property type="entry name" value="30S ribosomal protein S2"/>
    <property type="match status" value="1"/>
</dbReference>
<dbReference type="Gene3D" id="3.40.50.10490">
    <property type="entry name" value="Glucose-6-phosphate isomerase like protein, domain 1"/>
    <property type="match status" value="1"/>
</dbReference>
<dbReference type="Gene3D" id="1.10.287.610">
    <property type="entry name" value="Helix hairpin bin"/>
    <property type="match status" value="1"/>
</dbReference>
<dbReference type="HAMAP" id="MF_00291_B">
    <property type="entry name" value="Ribosomal_uS2_B"/>
    <property type="match status" value="1"/>
</dbReference>
<dbReference type="InterPro" id="IPR001865">
    <property type="entry name" value="Ribosomal_uS2"/>
</dbReference>
<dbReference type="InterPro" id="IPR005706">
    <property type="entry name" value="Ribosomal_uS2_bac/mit/plastid"/>
</dbReference>
<dbReference type="InterPro" id="IPR018130">
    <property type="entry name" value="Ribosomal_uS2_CS"/>
</dbReference>
<dbReference type="InterPro" id="IPR023591">
    <property type="entry name" value="Ribosomal_uS2_flav_dom_sf"/>
</dbReference>
<dbReference type="NCBIfam" id="NF008966">
    <property type="entry name" value="PRK12311.1"/>
    <property type="match status" value="1"/>
</dbReference>
<dbReference type="NCBIfam" id="TIGR01011">
    <property type="entry name" value="rpsB_bact"/>
    <property type="match status" value="1"/>
</dbReference>
<dbReference type="PANTHER" id="PTHR12534">
    <property type="entry name" value="30S RIBOSOMAL PROTEIN S2 PROKARYOTIC AND ORGANELLAR"/>
    <property type="match status" value="1"/>
</dbReference>
<dbReference type="PANTHER" id="PTHR12534:SF0">
    <property type="entry name" value="SMALL RIBOSOMAL SUBUNIT PROTEIN US2M"/>
    <property type="match status" value="1"/>
</dbReference>
<dbReference type="Pfam" id="PF00318">
    <property type="entry name" value="Ribosomal_S2"/>
    <property type="match status" value="1"/>
</dbReference>
<dbReference type="PRINTS" id="PR00395">
    <property type="entry name" value="RIBOSOMALS2"/>
</dbReference>
<dbReference type="SUPFAM" id="SSF52313">
    <property type="entry name" value="Ribosomal protein S2"/>
    <property type="match status" value="1"/>
</dbReference>
<dbReference type="PROSITE" id="PS00962">
    <property type="entry name" value="RIBOSOMAL_S2_1"/>
    <property type="match status" value="1"/>
</dbReference>
<dbReference type="PROSITE" id="PS00963">
    <property type="entry name" value="RIBOSOMAL_S2_2"/>
    <property type="match status" value="1"/>
</dbReference>
<name>RS2_XANP2</name>
<gene>
    <name evidence="1" type="primary">rpsB</name>
    <name type="ordered locus">Xaut_4439</name>
</gene>
<evidence type="ECO:0000255" key="1">
    <source>
        <dbReference type="HAMAP-Rule" id="MF_00291"/>
    </source>
</evidence>
<evidence type="ECO:0000305" key="2"/>
<reference key="1">
    <citation type="submission" date="2007-07" db="EMBL/GenBank/DDBJ databases">
        <title>Complete sequence of chromosome of Xanthobacter autotrophicus Py2.</title>
        <authorList>
            <consortium name="US DOE Joint Genome Institute"/>
            <person name="Copeland A."/>
            <person name="Lucas S."/>
            <person name="Lapidus A."/>
            <person name="Barry K."/>
            <person name="Glavina del Rio T."/>
            <person name="Hammon N."/>
            <person name="Israni S."/>
            <person name="Dalin E."/>
            <person name="Tice H."/>
            <person name="Pitluck S."/>
            <person name="Sims D."/>
            <person name="Brettin T."/>
            <person name="Bruce D."/>
            <person name="Detter J.C."/>
            <person name="Han C."/>
            <person name="Tapia R."/>
            <person name="Brainard J."/>
            <person name="Schmutz J."/>
            <person name="Larimer F."/>
            <person name="Land M."/>
            <person name="Hauser L."/>
            <person name="Kyrpides N."/>
            <person name="Kim E."/>
            <person name="Ensigns S.A."/>
            <person name="Richardson P."/>
        </authorList>
    </citation>
    <scope>NUCLEOTIDE SEQUENCE [LARGE SCALE GENOMIC DNA]</scope>
    <source>
        <strain>ATCC BAA-1158 / Py2</strain>
    </source>
</reference>
<sequence>MALPDYSMRQLLEAGVHFGHQSHRWNPKMAPYIFGVRNNIHIIDLSQTVPALHRALQAVSDTVAQGGRVLFVGTKRQAQEQVADAARRSAQYYVNSRWLGGMLTNWKTISNSIARLKKLEEMLSGPEQGSGYTKKERLTLSREKDKLDKALGGIRDMGGLPDLLFVIDTNKEDIAVKEAQRLGIPVAAILDTNCDPDGIAFPVPGNDDAGRAIQLYCELVARAAIDGIGRGHSDLGIDVGAEEAPLVEDLPVETGAWSSFEPLSGPRGVADDLKKLTGVSPEIEQKLNDLGVFHFGQVAGLDAIDAHRIGEEVGLPGRVDGWVAQAKELSAEVE</sequence>